<reference key="1">
    <citation type="journal article" date="1998" name="Science">
        <title>Complete genome sequence of Treponema pallidum, the syphilis spirochete.</title>
        <authorList>
            <person name="Fraser C.M."/>
            <person name="Norris S.J."/>
            <person name="Weinstock G.M."/>
            <person name="White O."/>
            <person name="Sutton G.G."/>
            <person name="Dodson R.J."/>
            <person name="Gwinn M.L."/>
            <person name="Hickey E.K."/>
            <person name="Clayton R.A."/>
            <person name="Ketchum K.A."/>
            <person name="Sodergren E."/>
            <person name="Hardham J.M."/>
            <person name="McLeod M.P."/>
            <person name="Salzberg S.L."/>
            <person name="Peterson J.D."/>
            <person name="Khalak H.G."/>
            <person name="Richardson D.L."/>
            <person name="Howell J.K."/>
            <person name="Chidambaram M."/>
            <person name="Utterback T.R."/>
            <person name="McDonald L.A."/>
            <person name="Artiach P."/>
            <person name="Bowman C."/>
            <person name="Cotton M.D."/>
            <person name="Fujii C."/>
            <person name="Garland S.A."/>
            <person name="Hatch B."/>
            <person name="Horst K."/>
            <person name="Roberts K.M."/>
            <person name="Sandusky M."/>
            <person name="Weidman J.F."/>
            <person name="Smith H.O."/>
            <person name="Venter J.C."/>
        </authorList>
    </citation>
    <scope>NUCLEOTIDE SEQUENCE [LARGE SCALE GENOMIC DNA]</scope>
    <source>
        <strain>Nichols</strain>
    </source>
</reference>
<evidence type="ECO:0000250" key="1"/>
<evidence type="ECO:0000305" key="2"/>
<sequence>MGADIGFIGLAVMGENLVLNIERNGFSVAVFNRTTTVVDRFLAGRAHGKRITGAHSIAELVSLLARPRKIMLMVKAGSAVDAVIDQILPLLEKGDLVIDGGNSHYQDTIRRMHALEAAGIHFIGTGVSGGEEGALRGPSLMPGGSAQAWPLVSPIFCAIAAKADDGTPCCDWVGSDGAGHYVKMIHNGIEYGDMQIIAEGYWFMKHALGMSYEHMHHTFTRWNTGRLHSYLIEITAAILAHQDTDGTPLLEKILDAAGQKGTGRWTCVAALEEGSPLTLITESVMARSLSAQKQARCKAHRVFGSPVKVSKAETLSAQQREELVSALEDALYCAKIVSYAQGFELLSHTAKRRGWTLDFSRIASLWRGGCIIRSGFLSKISAAFAQQHDLENLVLAPFFAEELKRACPGWRTIVAESVRQALPVPALSAALAWFDGFTGAALPANLLQAQRDYFGAHTYERTDAPRGEFFHTNWTGTGGDTIAGTYSI</sequence>
<dbReference type="EC" id="1.1.1.44"/>
<dbReference type="EMBL" id="AE000520">
    <property type="protein sequence ID" value="AAC65319.1"/>
    <property type="molecule type" value="Genomic_DNA"/>
</dbReference>
<dbReference type="PIR" id="A71337">
    <property type="entry name" value="A71337"/>
</dbReference>
<dbReference type="RefSeq" id="WP_010881779.1">
    <property type="nucleotide sequence ID" value="NC_021490.2"/>
</dbReference>
<dbReference type="SMR" id="O83351"/>
<dbReference type="STRING" id="243276.TP_0331"/>
<dbReference type="EnsemblBacteria" id="AAC65319">
    <property type="protein sequence ID" value="AAC65319"/>
    <property type="gene ID" value="TP_0331"/>
</dbReference>
<dbReference type="GeneID" id="93876112"/>
<dbReference type="KEGG" id="tpa:TP_0331"/>
<dbReference type="KEGG" id="tpw:TPANIC_0331"/>
<dbReference type="eggNOG" id="COG0362">
    <property type="taxonomic scope" value="Bacteria"/>
</dbReference>
<dbReference type="HOGENOM" id="CLU_024540_4_2_12"/>
<dbReference type="OrthoDB" id="9804542at2"/>
<dbReference type="UniPathway" id="UPA00115">
    <property type="reaction ID" value="UER00410"/>
</dbReference>
<dbReference type="Proteomes" id="UP000000811">
    <property type="component" value="Chromosome"/>
</dbReference>
<dbReference type="GO" id="GO:0050661">
    <property type="term" value="F:NADP binding"/>
    <property type="evidence" value="ECO:0007669"/>
    <property type="project" value="InterPro"/>
</dbReference>
<dbReference type="GO" id="GO:0004616">
    <property type="term" value="F:phosphogluconate dehydrogenase (decarboxylating) activity"/>
    <property type="evidence" value="ECO:0007669"/>
    <property type="project" value="UniProtKB-EC"/>
</dbReference>
<dbReference type="GO" id="GO:0019521">
    <property type="term" value="P:D-gluconate metabolic process"/>
    <property type="evidence" value="ECO:0007669"/>
    <property type="project" value="UniProtKB-KW"/>
</dbReference>
<dbReference type="GO" id="GO:0016054">
    <property type="term" value="P:organic acid catabolic process"/>
    <property type="evidence" value="ECO:0007669"/>
    <property type="project" value="UniProtKB-ARBA"/>
</dbReference>
<dbReference type="GO" id="GO:0006098">
    <property type="term" value="P:pentose-phosphate shunt"/>
    <property type="evidence" value="ECO:0007669"/>
    <property type="project" value="UniProtKB-UniPathway"/>
</dbReference>
<dbReference type="FunFam" id="1.10.1040.10:FF:000002">
    <property type="entry name" value="6-phosphogluconate dehydrogenase, decarboxylating"/>
    <property type="match status" value="1"/>
</dbReference>
<dbReference type="FunFam" id="1.20.5.320:FF:000002">
    <property type="entry name" value="6-phosphogluconate dehydrogenase, decarboxylating"/>
    <property type="match status" value="1"/>
</dbReference>
<dbReference type="FunFam" id="3.40.50.720:FF:000007">
    <property type="entry name" value="6-phosphogluconate dehydrogenase, decarboxylating"/>
    <property type="match status" value="1"/>
</dbReference>
<dbReference type="Gene3D" id="1.20.5.320">
    <property type="entry name" value="6-Phosphogluconate Dehydrogenase, domain 3"/>
    <property type="match status" value="1"/>
</dbReference>
<dbReference type="Gene3D" id="1.10.1040.10">
    <property type="entry name" value="N-(1-d-carboxylethyl)-l-norvaline Dehydrogenase, domain 2"/>
    <property type="match status" value="1"/>
</dbReference>
<dbReference type="Gene3D" id="3.40.50.720">
    <property type="entry name" value="NAD(P)-binding Rossmann-like Domain"/>
    <property type="match status" value="1"/>
</dbReference>
<dbReference type="InterPro" id="IPR008927">
    <property type="entry name" value="6-PGluconate_DH-like_C_sf"/>
</dbReference>
<dbReference type="InterPro" id="IPR013328">
    <property type="entry name" value="6PGD_dom2"/>
</dbReference>
<dbReference type="InterPro" id="IPR006114">
    <property type="entry name" value="6PGDH_C"/>
</dbReference>
<dbReference type="InterPro" id="IPR006113">
    <property type="entry name" value="6PGDH_Gnd/GntZ"/>
</dbReference>
<dbReference type="InterPro" id="IPR006115">
    <property type="entry name" value="6PGDH_NADP-bd"/>
</dbReference>
<dbReference type="InterPro" id="IPR006184">
    <property type="entry name" value="6PGdom_BS"/>
</dbReference>
<dbReference type="InterPro" id="IPR036291">
    <property type="entry name" value="NAD(P)-bd_dom_sf"/>
</dbReference>
<dbReference type="InterPro" id="IPR006183">
    <property type="entry name" value="Pgluconate_DH"/>
</dbReference>
<dbReference type="NCBIfam" id="TIGR00873">
    <property type="entry name" value="gnd"/>
    <property type="match status" value="1"/>
</dbReference>
<dbReference type="NCBIfam" id="NF006765">
    <property type="entry name" value="PRK09287.1"/>
    <property type="match status" value="1"/>
</dbReference>
<dbReference type="PANTHER" id="PTHR11811">
    <property type="entry name" value="6-PHOSPHOGLUCONATE DEHYDROGENASE"/>
    <property type="match status" value="1"/>
</dbReference>
<dbReference type="Pfam" id="PF00393">
    <property type="entry name" value="6PGD"/>
    <property type="match status" value="1"/>
</dbReference>
<dbReference type="Pfam" id="PF03446">
    <property type="entry name" value="NAD_binding_2"/>
    <property type="match status" value="1"/>
</dbReference>
<dbReference type="PIRSF" id="PIRSF000109">
    <property type="entry name" value="6PGD"/>
    <property type="match status" value="1"/>
</dbReference>
<dbReference type="PRINTS" id="PR00076">
    <property type="entry name" value="6PGDHDRGNASE"/>
</dbReference>
<dbReference type="SMART" id="SM01350">
    <property type="entry name" value="6PGD"/>
    <property type="match status" value="1"/>
</dbReference>
<dbReference type="SUPFAM" id="SSF48179">
    <property type="entry name" value="6-phosphogluconate dehydrogenase C-terminal domain-like"/>
    <property type="match status" value="1"/>
</dbReference>
<dbReference type="SUPFAM" id="SSF51735">
    <property type="entry name" value="NAD(P)-binding Rossmann-fold domains"/>
    <property type="match status" value="1"/>
</dbReference>
<dbReference type="PROSITE" id="PS00461">
    <property type="entry name" value="6PGD"/>
    <property type="match status" value="1"/>
</dbReference>
<comment type="function">
    <text evidence="1">Catalyzes the oxidative decarboxylation of 6-phosphogluconate to ribulose 5-phosphate and CO(2), with concomitant reduction of NADP to NADPH.</text>
</comment>
<comment type="catalytic activity">
    <reaction>
        <text>6-phospho-D-gluconate + NADP(+) = D-ribulose 5-phosphate + CO2 + NADPH</text>
        <dbReference type="Rhea" id="RHEA:10116"/>
        <dbReference type="ChEBI" id="CHEBI:16526"/>
        <dbReference type="ChEBI" id="CHEBI:57783"/>
        <dbReference type="ChEBI" id="CHEBI:58121"/>
        <dbReference type="ChEBI" id="CHEBI:58349"/>
        <dbReference type="ChEBI" id="CHEBI:58759"/>
        <dbReference type="EC" id="1.1.1.44"/>
    </reaction>
</comment>
<comment type="pathway">
    <text>Carbohydrate degradation; pentose phosphate pathway; D-ribulose 5-phosphate from D-glucose 6-phosphate (oxidative stage): step 3/3.</text>
</comment>
<comment type="subunit">
    <text evidence="1">Homodimer.</text>
</comment>
<comment type="similarity">
    <text evidence="2">Belongs to the 6-phosphogluconate dehydrogenase family.</text>
</comment>
<proteinExistence type="inferred from homology"/>
<keyword id="KW-0311">Gluconate utilization</keyword>
<keyword id="KW-0521">NADP</keyword>
<keyword id="KW-0560">Oxidoreductase</keyword>
<keyword id="KW-0570">Pentose shunt</keyword>
<keyword id="KW-1185">Reference proteome</keyword>
<feature type="chain" id="PRO_0000090062" description="6-phosphogluconate dehydrogenase, decarboxylating">
    <location>
        <begin position="1"/>
        <end position="488"/>
    </location>
</feature>
<feature type="active site" description="Proton acceptor" evidence="1">
    <location>
        <position position="183"/>
    </location>
</feature>
<feature type="active site" description="Proton donor" evidence="1">
    <location>
        <position position="190"/>
    </location>
</feature>
<feature type="binding site" evidence="1">
    <location>
        <begin position="9"/>
        <end position="14"/>
    </location>
    <ligand>
        <name>NADP(+)</name>
        <dbReference type="ChEBI" id="CHEBI:58349"/>
    </ligand>
</feature>
<feature type="binding site" evidence="1">
    <location>
        <begin position="32"/>
        <end position="34"/>
    </location>
    <ligand>
        <name>NADP(+)</name>
        <dbReference type="ChEBI" id="CHEBI:58349"/>
    </ligand>
</feature>
<feature type="binding site" evidence="1">
    <location>
        <begin position="74"/>
        <end position="76"/>
    </location>
    <ligand>
        <name>NADP(+)</name>
        <dbReference type="ChEBI" id="CHEBI:58349"/>
    </ligand>
</feature>
<feature type="binding site" evidence="1">
    <location>
        <position position="102"/>
    </location>
    <ligand>
        <name>NADP(+)</name>
        <dbReference type="ChEBI" id="CHEBI:58349"/>
    </ligand>
</feature>
<feature type="binding site" description="in other chain" evidence="1">
    <location>
        <position position="102"/>
    </location>
    <ligand>
        <name>substrate</name>
        <note>ligand shared between dimeric partners</note>
    </ligand>
</feature>
<feature type="binding site" description="in other chain" evidence="1">
    <location>
        <begin position="128"/>
        <end position="130"/>
    </location>
    <ligand>
        <name>substrate</name>
        <note>ligand shared between dimeric partners</note>
    </ligand>
</feature>
<feature type="binding site" description="in other chain" evidence="1">
    <location>
        <begin position="186"/>
        <end position="187"/>
    </location>
    <ligand>
        <name>substrate</name>
        <note>ligand shared between dimeric partners</note>
    </ligand>
</feature>
<feature type="binding site" description="in other chain" evidence="1">
    <location>
        <position position="191"/>
    </location>
    <ligand>
        <name>substrate</name>
        <note>ligand shared between dimeric partners</note>
    </ligand>
</feature>
<feature type="binding site" description="in other chain" evidence="1">
    <location>
        <position position="260"/>
    </location>
    <ligand>
        <name>substrate</name>
        <note>ligand shared between dimeric partners</note>
    </ligand>
</feature>
<feature type="binding site" description="in other chain" evidence="1">
    <location>
        <position position="287"/>
    </location>
    <ligand>
        <name>substrate</name>
        <note>ligand shared between dimeric partners</note>
    </ligand>
</feature>
<feature type="binding site" evidence="1">
    <location>
        <position position="451"/>
    </location>
    <ligand>
        <name>substrate</name>
        <note>ligand shared between dimeric partners</note>
    </ligand>
</feature>
<feature type="binding site" evidence="1">
    <location>
        <position position="457"/>
    </location>
    <ligand>
        <name>substrate</name>
        <note>ligand shared between dimeric partners</note>
    </ligand>
</feature>
<protein>
    <recommendedName>
        <fullName>6-phosphogluconate dehydrogenase, decarboxylating</fullName>
        <ecNumber>1.1.1.44</ecNumber>
    </recommendedName>
</protein>
<accession>O83351</accession>
<gene>
    <name type="primary">gnd</name>
    <name type="ordered locus">TP_0331</name>
</gene>
<organism>
    <name type="scientific">Treponema pallidum (strain Nichols)</name>
    <dbReference type="NCBI Taxonomy" id="243276"/>
    <lineage>
        <taxon>Bacteria</taxon>
        <taxon>Pseudomonadati</taxon>
        <taxon>Spirochaetota</taxon>
        <taxon>Spirochaetia</taxon>
        <taxon>Spirochaetales</taxon>
        <taxon>Treponemataceae</taxon>
        <taxon>Treponema</taxon>
    </lineage>
</organism>
<name>6PGD_TREPA</name>